<proteinExistence type="evidence at transcript level"/>
<organism>
    <name type="scientific">Gallus gallus</name>
    <name type="common">Chicken</name>
    <dbReference type="NCBI Taxonomy" id="9031"/>
    <lineage>
        <taxon>Eukaryota</taxon>
        <taxon>Metazoa</taxon>
        <taxon>Chordata</taxon>
        <taxon>Craniata</taxon>
        <taxon>Vertebrata</taxon>
        <taxon>Euteleostomi</taxon>
        <taxon>Archelosauria</taxon>
        <taxon>Archosauria</taxon>
        <taxon>Dinosauria</taxon>
        <taxon>Saurischia</taxon>
        <taxon>Theropoda</taxon>
        <taxon>Coelurosauria</taxon>
        <taxon>Aves</taxon>
        <taxon>Neognathae</taxon>
        <taxon>Galloanserae</taxon>
        <taxon>Galliformes</taxon>
        <taxon>Phasianidae</taxon>
        <taxon>Phasianinae</taxon>
        <taxon>Gallus</taxon>
    </lineage>
</organism>
<sequence length="354" mass="39507">MKPSPQFFLAAFLSLILQTGICYGIKWIALSKTPSSLALNQTQHCKQLEGLVVSQVQLCRSNLELMQTIIQAAREVIKTCRKTFSDMRWNCSSIELAPNYLLDLERGTRESAFVYALSAAAISHTIARACTTGDLPGCSCGPIPGETPGPGYRWGGCADNLNYGLIMGSKFSDAPMKMKKSGSQANKLMHLHNSEVGRQVLKASLEMKCKCHGVSGSCSIKTCWKGLQELRDIALDLKNKYLSATKVVHRPMGTRKYLVPKDIDIRPVKETELIYLQSSPDFCMKNEKVGSHGTQDRQCNKTSNGSDSCDLMCCGRGYNPYMDKVVERCHCKYHWCCYVTCKKCERTVERYVCK</sequence>
<comment type="function">
    <text>Ligand for members of the frizzled family of seven transmembrane receptors. May play a role in the formation of dermal structure, both limb and feather buds. Is likely to signal over only few cell diameters.</text>
</comment>
<comment type="subcellular location">
    <subcellularLocation>
        <location>Secreted</location>
        <location>Extracellular space</location>
        <location>Extracellular matrix</location>
    </subcellularLocation>
</comment>
<comment type="tissue specificity">
    <text>Expressed in the dermatome. The expression domain is mutually exclusive to the other Wnt genes.</text>
</comment>
<comment type="developmental stage">
    <text>Expressed during embryogenesis.</text>
</comment>
<comment type="PTM">
    <text evidence="1 3">Palmitoleoylation is required for efficient binding to frizzled receptors. Depalmitoleoylation leads to Wnt signaling pathway inhibition.</text>
</comment>
<comment type="similarity">
    <text evidence="5">Belongs to the Wnt family.</text>
</comment>
<gene>
    <name type="primary">WNT11</name>
    <name type="synonym">WNT-11</name>
</gene>
<name>WNT11_CHICK</name>
<keyword id="KW-0217">Developmental protein</keyword>
<keyword id="KW-1015">Disulfide bond</keyword>
<keyword id="KW-0272">Extracellular matrix</keyword>
<keyword id="KW-0325">Glycoprotein</keyword>
<keyword id="KW-0449">Lipoprotein</keyword>
<keyword id="KW-1185">Reference proteome</keyword>
<keyword id="KW-0964">Secreted</keyword>
<keyword id="KW-0732">Signal</keyword>
<keyword id="KW-0879">Wnt signaling pathway</keyword>
<accession>P49339</accession>
<reference key="1">
    <citation type="journal article" date="1995" name="Biochem. Biophys. Res. Commun.">
        <title>A chicken Wnt gene, Wnt-11, is involved in dermal development.</title>
        <authorList>
            <person name="Tanda N."/>
            <person name="Ohuchi H."/>
            <person name="Yoshioka H."/>
            <person name="Noji S."/>
            <person name="Nohno T."/>
        </authorList>
    </citation>
    <scope>NUCLEOTIDE SEQUENCE [MRNA]</scope>
</reference>
<reference key="2">
    <citation type="journal article" date="1995" name="DNA Seq.">
        <title>Cloning and characterization of Wnt-4 and Wnt-11 cDNAs from chick embryo.</title>
        <authorList>
            <person name="Tanda N."/>
            <person name="Kawakami Y."/>
            <person name="Saito T."/>
            <person name="Noji S."/>
            <person name="Nohno T."/>
        </authorList>
    </citation>
    <scope>NUCLEOTIDE SEQUENCE [MRNA]</scope>
</reference>
<dbReference type="EMBL" id="D31901">
    <property type="protein sequence ID" value="BAA06699.1"/>
    <property type="molecule type" value="mRNA"/>
</dbReference>
<dbReference type="PIR" id="JC4152">
    <property type="entry name" value="JC4152"/>
</dbReference>
<dbReference type="RefSeq" id="NP_990115.1">
    <property type="nucleotide sequence ID" value="NM_204784.1"/>
</dbReference>
<dbReference type="RefSeq" id="XP_015136337.1">
    <property type="nucleotide sequence ID" value="XM_015280851.4"/>
</dbReference>
<dbReference type="RefSeq" id="XP_046762597.1">
    <property type="nucleotide sequence ID" value="XM_046906641.1"/>
</dbReference>
<dbReference type="SMR" id="P49339"/>
<dbReference type="FunCoup" id="P49339">
    <property type="interactions" value="97"/>
</dbReference>
<dbReference type="STRING" id="9031.ENSGALP00000001229"/>
<dbReference type="GlyCosmos" id="P49339">
    <property type="glycosylation" value="4 sites, No reported glycans"/>
</dbReference>
<dbReference type="GlyGen" id="P49339">
    <property type="glycosylation" value="4 sites"/>
</dbReference>
<dbReference type="PaxDb" id="9031-ENSGALP00000042987"/>
<dbReference type="Ensembl" id="ENSGALT00010005342.1">
    <property type="protein sequence ID" value="ENSGALP00010003181.1"/>
    <property type="gene ID" value="ENSGALG00010002356.1"/>
</dbReference>
<dbReference type="GeneID" id="395562"/>
<dbReference type="KEGG" id="gga:395562"/>
<dbReference type="CTD" id="7481"/>
<dbReference type="VEuPathDB" id="HostDB:geneid_395562"/>
<dbReference type="eggNOG" id="KOG3913">
    <property type="taxonomic scope" value="Eukaryota"/>
</dbReference>
<dbReference type="GeneTree" id="ENSGT00940000158413"/>
<dbReference type="InParanoid" id="P49339"/>
<dbReference type="OMA" id="CKLLPGM"/>
<dbReference type="OrthoDB" id="5945655at2759"/>
<dbReference type="PhylomeDB" id="P49339"/>
<dbReference type="TreeFam" id="TF105310"/>
<dbReference type="Reactome" id="R-GGA-3238698">
    <property type="pathway name" value="WNT ligand biogenesis and trafficking"/>
</dbReference>
<dbReference type="Reactome" id="R-GGA-4086398">
    <property type="pathway name" value="Ca2+ pathway"/>
</dbReference>
<dbReference type="PRO" id="PR:P49339"/>
<dbReference type="Proteomes" id="UP000000539">
    <property type="component" value="Chromosome 1"/>
</dbReference>
<dbReference type="Bgee" id="ENSGALG00000000839">
    <property type="expression patterns" value="Expressed in lung and 3 other cell types or tissues"/>
</dbReference>
<dbReference type="GO" id="GO:0005737">
    <property type="term" value="C:cytoplasm"/>
    <property type="evidence" value="ECO:0000250"/>
    <property type="project" value="UniProtKB"/>
</dbReference>
<dbReference type="GO" id="GO:0031012">
    <property type="term" value="C:extracellular matrix"/>
    <property type="evidence" value="ECO:0007669"/>
    <property type="project" value="Ensembl"/>
</dbReference>
<dbReference type="GO" id="GO:0005615">
    <property type="term" value="C:extracellular space"/>
    <property type="evidence" value="ECO:0000318"/>
    <property type="project" value="GO_Central"/>
</dbReference>
<dbReference type="GO" id="GO:0042056">
    <property type="term" value="F:chemoattractant activity"/>
    <property type="evidence" value="ECO:0000315"/>
    <property type="project" value="AgBase"/>
</dbReference>
<dbReference type="GO" id="GO:0005125">
    <property type="term" value="F:cytokine activity"/>
    <property type="evidence" value="ECO:0000318"/>
    <property type="project" value="GO_Central"/>
</dbReference>
<dbReference type="GO" id="GO:0005109">
    <property type="term" value="F:frizzled binding"/>
    <property type="evidence" value="ECO:0000318"/>
    <property type="project" value="GO_Central"/>
</dbReference>
<dbReference type="GO" id="GO:0030295">
    <property type="term" value="F:protein kinase activator activity"/>
    <property type="evidence" value="ECO:0007669"/>
    <property type="project" value="Ensembl"/>
</dbReference>
<dbReference type="GO" id="GO:0030325">
    <property type="term" value="P:adrenal gland development"/>
    <property type="evidence" value="ECO:0007669"/>
    <property type="project" value="Ensembl"/>
</dbReference>
<dbReference type="GO" id="GO:0048844">
    <property type="term" value="P:artery morphogenesis"/>
    <property type="evidence" value="ECO:0007669"/>
    <property type="project" value="Ensembl"/>
</dbReference>
<dbReference type="GO" id="GO:0003283">
    <property type="term" value="P:atrial septum development"/>
    <property type="evidence" value="ECO:0007669"/>
    <property type="project" value="Ensembl"/>
</dbReference>
<dbReference type="GO" id="GO:0070830">
    <property type="term" value="P:bicellular tight junction assembly"/>
    <property type="evidence" value="ECO:0007669"/>
    <property type="project" value="Ensembl"/>
</dbReference>
<dbReference type="GO" id="GO:0030282">
    <property type="term" value="P:bone mineralization"/>
    <property type="evidence" value="ECO:0007669"/>
    <property type="project" value="Ensembl"/>
</dbReference>
<dbReference type="GO" id="GO:0060070">
    <property type="term" value="P:canonical Wnt signaling pathway"/>
    <property type="evidence" value="ECO:0000318"/>
    <property type="project" value="GO_Central"/>
</dbReference>
<dbReference type="GO" id="GO:0045165">
    <property type="term" value="P:cell fate commitment"/>
    <property type="evidence" value="ECO:0000315"/>
    <property type="project" value="AgBase"/>
</dbReference>
<dbReference type="GO" id="GO:0016477">
    <property type="term" value="P:cell migration"/>
    <property type="evidence" value="ECO:0000315"/>
    <property type="project" value="AgBase"/>
</dbReference>
<dbReference type="GO" id="GO:0071260">
    <property type="term" value="P:cellular response to mechanical stimulus"/>
    <property type="evidence" value="ECO:0007669"/>
    <property type="project" value="Ensembl"/>
</dbReference>
<dbReference type="GO" id="GO:0060197">
    <property type="term" value="P:cloacal septation"/>
    <property type="evidence" value="ECO:0007669"/>
    <property type="project" value="Ensembl"/>
</dbReference>
<dbReference type="GO" id="GO:0060028">
    <property type="term" value="P:convergent extension involved in axis elongation"/>
    <property type="evidence" value="ECO:0007669"/>
    <property type="project" value="Ensembl"/>
</dbReference>
<dbReference type="GO" id="GO:0035113">
    <property type="term" value="P:embryonic appendage morphogenesis"/>
    <property type="evidence" value="ECO:0000315"/>
    <property type="project" value="AgBase"/>
</dbReference>
<dbReference type="GO" id="GO:0048703">
    <property type="term" value="P:embryonic viscerocranium morphogenesis"/>
    <property type="evidence" value="ECO:0000315"/>
    <property type="project" value="AgBase"/>
</dbReference>
<dbReference type="GO" id="GO:1904019">
    <property type="term" value="P:epithelial cell apoptotic process"/>
    <property type="evidence" value="ECO:0007669"/>
    <property type="project" value="Ensembl"/>
</dbReference>
<dbReference type="GO" id="GO:0001837">
    <property type="term" value="P:epithelial to mesenchymal transition"/>
    <property type="evidence" value="ECO:0000315"/>
    <property type="project" value="AgBase"/>
</dbReference>
<dbReference type="GO" id="GO:0060325">
    <property type="term" value="P:face morphogenesis"/>
    <property type="evidence" value="ECO:0000315"/>
    <property type="project" value="AgBase"/>
</dbReference>
<dbReference type="GO" id="GO:0035556">
    <property type="term" value="P:intracellular signal transduction"/>
    <property type="evidence" value="ECO:0000250"/>
    <property type="project" value="UniProtKB"/>
</dbReference>
<dbReference type="GO" id="GO:0060484">
    <property type="term" value="P:lung-associated mesenchyme development"/>
    <property type="evidence" value="ECO:0007669"/>
    <property type="project" value="Ensembl"/>
</dbReference>
<dbReference type="GO" id="GO:0045199">
    <property type="term" value="P:maintenance of epithelial cell apical/basal polarity"/>
    <property type="evidence" value="ECO:0007669"/>
    <property type="project" value="Ensembl"/>
</dbReference>
<dbReference type="GO" id="GO:0010463">
    <property type="term" value="P:mesenchymal cell proliferation"/>
    <property type="evidence" value="ECO:0007669"/>
    <property type="project" value="Ensembl"/>
</dbReference>
<dbReference type="GO" id="GO:0072177">
    <property type="term" value="P:mesonephric duct development"/>
    <property type="evidence" value="ECO:0007669"/>
    <property type="project" value="Ensembl"/>
</dbReference>
<dbReference type="GO" id="GO:0045445">
    <property type="term" value="P:myoblast differentiation"/>
    <property type="evidence" value="ECO:0000314"/>
    <property type="project" value="AgBase"/>
</dbReference>
<dbReference type="GO" id="GO:0090090">
    <property type="term" value="P:negative regulation of canonical Wnt signaling pathway"/>
    <property type="evidence" value="ECO:0000315"/>
    <property type="project" value="AgBase"/>
</dbReference>
<dbReference type="GO" id="GO:0008285">
    <property type="term" value="P:negative regulation of cell population proliferation"/>
    <property type="evidence" value="ECO:0000315"/>
    <property type="project" value="AgBase"/>
</dbReference>
<dbReference type="GO" id="GO:0090272">
    <property type="term" value="P:negative regulation of fibroblast growth factor production"/>
    <property type="evidence" value="ECO:0007669"/>
    <property type="project" value="Ensembl"/>
</dbReference>
<dbReference type="GO" id="GO:0010629">
    <property type="term" value="P:negative regulation of gene expression"/>
    <property type="evidence" value="ECO:0000315"/>
    <property type="project" value="AgBase"/>
</dbReference>
<dbReference type="GO" id="GO:0072201">
    <property type="term" value="P:negative regulation of mesenchymal cell proliferation"/>
    <property type="evidence" value="ECO:0007669"/>
    <property type="project" value="Ensembl"/>
</dbReference>
<dbReference type="GO" id="GO:2000647">
    <property type="term" value="P:negative regulation of stem cell proliferation"/>
    <property type="evidence" value="ECO:0007669"/>
    <property type="project" value="Ensembl"/>
</dbReference>
<dbReference type="GO" id="GO:0061101">
    <property type="term" value="P:neuroendocrine cell differentiation"/>
    <property type="evidence" value="ECO:0000250"/>
    <property type="project" value="UniProtKB"/>
</dbReference>
<dbReference type="GO" id="GO:0030182">
    <property type="term" value="P:neuron differentiation"/>
    <property type="evidence" value="ECO:0000318"/>
    <property type="project" value="GO_Central"/>
</dbReference>
<dbReference type="GO" id="GO:0048570">
    <property type="term" value="P:notochord morphogenesis"/>
    <property type="evidence" value="ECO:0007669"/>
    <property type="project" value="Ensembl"/>
</dbReference>
<dbReference type="GO" id="GO:0001649">
    <property type="term" value="P:osteoblast differentiation"/>
    <property type="evidence" value="ECO:0007669"/>
    <property type="project" value="Ensembl"/>
</dbReference>
<dbReference type="GO" id="GO:0003151">
    <property type="term" value="P:outflow tract morphogenesis"/>
    <property type="evidence" value="ECO:0007669"/>
    <property type="project" value="Ensembl"/>
</dbReference>
<dbReference type="GO" id="GO:0048341">
    <property type="term" value="P:paraxial mesoderm formation"/>
    <property type="evidence" value="ECO:0007669"/>
    <property type="project" value="Ensembl"/>
</dbReference>
<dbReference type="GO" id="GO:0045893">
    <property type="term" value="P:positive regulation of DNA-templated transcription"/>
    <property type="evidence" value="ECO:0000250"/>
    <property type="project" value="UniProtKB"/>
</dbReference>
<dbReference type="GO" id="GO:1904037">
    <property type="term" value="P:positive regulation of epithelial cell apoptotic process"/>
    <property type="evidence" value="ECO:0007669"/>
    <property type="project" value="Ensembl"/>
</dbReference>
<dbReference type="GO" id="GO:0010628">
    <property type="term" value="P:positive regulation of gene expression"/>
    <property type="evidence" value="ECO:0000315"/>
    <property type="project" value="AgBase"/>
</dbReference>
<dbReference type="GO" id="GO:0032915">
    <property type="term" value="P:positive regulation of transforming growth factor beta2 production"/>
    <property type="evidence" value="ECO:0007669"/>
    <property type="project" value="Ensembl"/>
</dbReference>
<dbReference type="GO" id="GO:0003138">
    <property type="term" value="P:primary heart field specification"/>
    <property type="evidence" value="ECO:0007669"/>
    <property type="project" value="Ensembl"/>
</dbReference>
<dbReference type="GO" id="GO:1903929">
    <property type="term" value="P:primary palate development"/>
    <property type="evidence" value="ECO:0000315"/>
    <property type="project" value="AgBase"/>
</dbReference>
<dbReference type="GO" id="GO:0003139">
    <property type="term" value="P:secondary heart field specification"/>
    <property type="evidence" value="ECO:0007669"/>
    <property type="project" value="Ensembl"/>
</dbReference>
<dbReference type="GO" id="GO:0062009">
    <property type="term" value="P:secondary palate development"/>
    <property type="evidence" value="ECO:0000250"/>
    <property type="project" value="UniProtKB"/>
</dbReference>
<dbReference type="GO" id="GO:0007165">
    <property type="term" value="P:signal transduction"/>
    <property type="evidence" value="ECO:0000250"/>
    <property type="project" value="UniProtKB"/>
</dbReference>
<dbReference type="GO" id="GO:0043589">
    <property type="term" value="P:skin morphogenesis"/>
    <property type="evidence" value="ECO:0000315"/>
    <property type="project" value="AgBase"/>
</dbReference>
<dbReference type="GO" id="GO:0061053">
    <property type="term" value="P:somite development"/>
    <property type="evidence" value="ECO:0007669"/>
    <property type="project" value="Ensembl"/>
</dbReference>
<dbReference type="GO" id="GO:0072089">
    <property type="term" value="P:stem cell proliferation"/>
    <property type="evidence" value="ECO:0007669"/>
    <property type="project" value="Ensembl"/>
</dbReference>
<dbReference type="GO" id="GO:0060675">
    <property type="term" value="P:ureteric bud morphogenesis"/>
    <property type="evidence" value="ECO:0007669"/>
    <property type="project" value="Ensembl"/>
</dbReference>
<dbReference type="GO" id="GO:0060412">
    <property type="term" value="P:ventricular septum morphogenesis"/>
    <property type="evidence" value="ECO:0007669"/>
    <property type="project" value="Ensembl"/>
</dbReference>
<dbReference type="GO" id="GO:0060071">
    <property type="term" value="P:Wnt signaling pathway, planar cell polarity pathway"/>
    <property type="evidence" value="ECO:0000315"/>
    <property type="project" value="AgBase"/>
</dbReference>
<dbReference type="CDD" id="cd19343">
    <property type="entry name" value="Wnt_Wnt11"/>
    <property type="match status" value="1"/>
</dbReference>
<dbReference type="FunFam" id="3.30.2460.20:FF:000001">
    <property type="entry name" value="Wnt homolog"/>
    <property type="match status" value="1"/>
</dbReference>
<dbReference type="Gene3D" id="3.30.2460.20">
    <property type="match status" value="1"/>
</dbReference>
<dbReference type="InterPro" id="IPR005817">
    <property type="entry name" value="Wnt"/>
</dbReference>
<dbReference type="InterPro" id="IPR043158">
    <property type="entry name" value="Wnt_C"/>
</dbReference>
<dbReference type="InterPro" id="IPR018161">
    <property type="entry name" value="Wnt_CS"/>
</dbReference>
<dbReference type="PANTHER" id="PTHR12027:SF7">
    <property type="entry name" value="PROTEIN WNT-11"/>
    <property type="match status" value="1"/>
</dbReference>
<dbReference type="PANTHER" id="PTHR12027">
    <property type="entry name" value="WNT RELATED"/>
    <property type="match status" value="1"/>
</dbReference>
<dbReference type="Pfam" id="PF00110">
    <property type="entry name" value="wnt"/>
    <property type="match status" value="1"/>
</dbReference>
<dbReference type="PRINTS" id="PR01349">
    <property type="entry name" value="WNTPROTEIN"/>
</dbReference>
<dbReference type="SMART" id="SM00097">
    <property type="entry name" value="WNT1"/>
    <property type="match status" value="1"/>
</dbReference>
<dbReference type="PROSITE" id="PS00246">
    <property type="entry name" value="WNT1"/>
    <property type="match status" value="1"/>
</dbReference>
<evidence type="ECO:0000250" key="1">
    <source>
        <dbReference type="UniProtKB" id="P27467"/>
    </source>
</evidence>
<evidence type="ECO:0000250" key="2">
    <source>
        <dbReference type="UniProtKB" id="P28026"/>
    </source>
</evidence>
<evidence type="ECO:0000250" key="3">
    <source>
        <dbReference type="UniProtKB" id="P56704"/>
    </source>
</evidence>
<evidence type="ECO:0000255" key="4"/>
<evidence type="ECO:0000305" key="5"/>
<protein>
    <recommendedName>
        <fullName>Protein Wnt-11</fullName>
    </recommendedName>
</protein>
<feature type="signal peptide" evidence="4">
    <location>
        <begin position="1"/>
        <end position="24"/>
    </location>
</feature>
<feature type="chain" id="PRO_0000041467" description="Protein Wnt-11">
    <location>
        <begin position="25"/>
        <end position="354"/>
    </location>
</feature>
<feature type="lipid moiety-binding region" description="O-palmitoleoyl serine; by PORCN" evidence="3">
    <location>
        <position position="215"/>
    </location>
</feature>
<feature type="glycosylation site" description="N-linked (GlcNAc...) asparagine" evidence="4">
    <location>
        <position position="40"/>
    </location>
</feature>
<feature type="glycosylation site" description="N-linked (GlcNAc...) asparagine" evidence="4">
    <location>
        <position position="90"/>
    </location>
</feature>
<feature type="glycosylation site" description="N-linked (GlcNAc...) asparagine" evidence="4">
    <location>
        <position position="300"/>
    </location>
</feature>
<feature type="glycosylation site" description="N-linked (GlcNAc...) asparagine" evidence="4">
    <location>
        <position position="304"/>
    </location>
</feature>
<feature type="disulfide bond" evidence="2">
    <location>
        <begin position="80"/>
        <end position="91"/>
    </location>
</feature>
<feature type="disulfide bond" evidence="2">
    <location>
        <begin position="130"/>
        <end position="138"/>
    </location>
</feature>
<feature type="disulfide bond" evidence="2">
    <location>
        <begin position="140"/>
        <end position="157"/>
    </location>
</feature>
<feature type="disulfide bond" evidence="2">
    <location>
        <begin position="209"/>
        <end position="223"/>
    </location>
</feature>
<feature type="disulfide bond" evidence="2">
    <location>
        <begin position="211"/>
        <end position="218"/>
    </location>
</feature>
<feature type="disulfide bond" evidence="2">
    <location>
        <begin position="283"/>
        <end position="314"/>
    </location>
</feature>
<feature type="disulfide bond" evidence="2">
    <location>
        <begin position="299"/>
        <end position="309"/>
    </location>
</feature>
<feature type="disulfide bond" evidence="2">
    <location>
        <begin position="313"/>
        <end position="353"/>
    </location>
</feature>
<feature type="disulfide bond" evidence="2">
    <location>
        <begin position="329"/>
        <end position="344"/>
    </location>
</feature>
<feature type="disulfide bond" evidence="2">
    <location>
        <begin position="331"/>
        <end position="341"/>
    </location>
</feature>
<feature type="disulfide bond" evidence="2">
    <location>
        <begin position="336"/>
        <end position="337"/>
    </location>
</feature>